<organism>
    <name type="scientific">Bordetella pertussis (strain Tohama I / ATCC BAA-589 / NCTC 13251)</name>
    <dbReference type="NCBI Taxonomy" id="257313"/>
    <lineage>
        <taxon>Bacteria</taxon>
        <taxon>Pseudomonadati</taxon>
        <taxon>Pseudomonadota</taxon>
        <taxon>Betaproteobacteria</taxon>
        <taxon>Burkholderiales</taxon>
        <taxon>Alcaligenaceae</taxon>
        <taxon>Bordetella</taxon>
    </lineage>
</organism>
<keyword id="KW-1185">Reference proteome</keyword>
<keyword id="KW-0687">Ribonucleoprotein</keyword>
<keyword id="KW-0689">Ribosomal protein</keyword>
<keyword id="KW-0694">RNA-binding</keyword>
<keyword id="KW-0699">rRNA-binding</keyword>
<reference key="1">
    <citation type="journal article" date="2003" name="Nat. Genet.">
        <title>Comparative analysis of the genome sequences of Bordetella pertussis, Bordetella parapertussis and Bordetella bronchiseptica.</title>
        <authorList>
            <person name="Parkhill J."/>
            <person name="Sebaihia M."/>
            <person name="Preston A."/>
            <person name="Murphy L.D."/>
            <person name="Thomson N.R."/>
            <person name="Harris D.E."/>
            <person name="Holden M.T.G."/>
            <person name="Churcher C.M."/>
            <person name="Bentley S.D."/>
            <person name="Mungall K.L."/>
            <person name="Cerdeno-Tarraga A.-M."/>
            <person name="Temple L."/>
            <person name="James K.D."/>
            <person name="Harris B."/>
            <person name="Quail M.A."/>
            <person name="Achtman M."/>
            <person name="Atkin R."/>
            <person name="Baker S."/>
            <person name="Basham D."/>
            <person name="Bason N."/>
            <person name="Cherevach I."/>
            <person name="Chillingworth T."/>
            <person name="Collins M."/>
            <person name="Cronin A."/>
            <person name="Davis P."/>
            <person name="Doggett J."/>
            <person name="Feltwell T."/>
            <person name="Goble A."/>
            <person name="Hamlin N."/>
            <person name="Hauser H."/>
            <person name="Holroyd S."/>
            <person name="Jagels K."/>
            <person name="Leather S."/>
            <person name="Moule S."/>
            <person name="Norberczak H."/>
            <person name="O'Neil S."/>
            <person name="Ormond D."/>
            <person name="Price C."/>
            <person name="Rabbinowitsch E."/>
            <person name="Rutter S."/>
            <person name="Sanders M."/>
            <person name="Saunders D."/>
            <person name="Seeger K."/>
            <person name="Sharp S."/>
            <person name="Simmonds M."/>
            <person name="Skelton J."/>
            <person name="Squares R."/>
            <person name="Squares S."/>
            <person name="Stevens K."/>
            <person name="Unwin L."/>
            <person name="Whitehead S."/>
            <person name="Barrell B.G."/>
            <person name="Maskell D.J."/>
        </authorList>
    </citation>
    <scope>NUCLEOTIDE SEQUENCE [LARGE SCALE GENOMIC DNA]</scope>
    <source>
        <strain>Tohama I / ATCC BAA-589 / NCTC 13251</strain>
    </source>
</reference>
<dbReference type="EMBL" id="BX640420">
    <property type="protein sequence ID" value="CAE43391.1"/>
    <property type="molecule type" value="Genomic_DNA"/>
</dbReference>
<dbReference type="RefSeq" id="NP_881689.1">
    <property type="nucleotide sequence ID" value="NC_002929.2"/>
</dbReference>
<dbReference type="SMR" id="Q7VUH2"/>
<dbReference type="STRING" id="257313.BP3124"/>
<dbReference type="PaxDb" id="257313-BP3124"/>
<dbReference type="KEGG" id="bpe:BP3124"/>
<dbReference type="PATRIC" id="fig|257313.5.peg.3375"/>
<dbReference type="eggNOG" id="COG1825">
    <property type="taxonomic scope" value="Bacteria"/>
</dbReference>
<dbReference type="HOGENOM" id="CLU_075939_0_1_4"/>
<dbReference type="Proteomes" id="UP000002676">
    <property type="component" value="Chromosome"/>
</dbReference>
<dbReference type="GO" id="GO:0022625">
    <property type="term" value="C:cytosolic large ribosomal subunit"/>
    <property type="evidence" value="ECO:0007669"/>
    <property type="project" value="TreeGrafter"/>
</dbReference>
<dbReference type="GO" id="GO:0008097">
    <property type="term" value="F:5S rRNA binding"/>
    <property type="evidence" value="ECO:0007669"/>
    <property type="project" value="InterPro"/>
</dbReference>
<dbReference type="GO" id="GO:0003735">
    <property type="term" value="F:structural constituent of ribosome"/>
    <property type="evidence" value="ECO:0007669"/>
    <property type="project" value="InterPro"/>
</dbReference>
<dbReference type="GO" id="GO:0006412">
    <property type="term" value="P:translation"/>
    <property type="evidence" value="ECO:0007669"/>
    <property type="project" value="UniProtKB-UniRule"/>
</dbReference>
<dbReference type="CDD" id="cd00495">
    <property type="entry name" value="Ribosomal_L25_TL5_CTC"/>
    <property type="match status" value="1"/>
</dbReference>
<dbReference type="FunFam" id="2.40.240.10:FF:000002">
    <property type="entry name" value="50S ribosomal protein L25"/>
    <property type="match status" value="1"/>
</dbReference>
<dbReference type="Gene3D" id="2.170.120.20">
    <property type="entry name" value="Ribosomal protein L25, beta domain"/>
    <property type="match status" value="1"/>
</dbReference>
<dbReference type="Gene3D" id="2.40.240.10">
    <property type="entry name" value="Ribosomal Protein L25, Chain P"/>
    <property type="match status" value="1"/>
</dbReference>
<dbReference type="HAMAP" id="MF_01336">
    <property type="entry name" value="Ribosomal_bL25"/>
    <property type="match status" value="1"/>
</dbReference>
<dbReference type="HAMAP" id="MF_01334">
    <property type="entry name" value="Ribosomal_bL25_CTC"/>
    <property type="match status" value="1"/>
</dbReference>
<dbReference type="InterPro" id="IPR020056">
    <property type="entry name" value="Rbsml_bL25/Gln-tRNA_synth_N"/>
</dbReference>
<dbReference type="InterPro" id="IPR011035">
    <property type="entry name" value="Ribosomal_bL25/Gln-tRNA_synth"/>
</dbReference>
<dbReference type="InterPro" id="IPR020057">
    <property type="entry name" value="Ribosomal_bL25_b-dom"/>
</dbReference>
<dbReference type="InterPro" id="IPR037121">
    <property type="entry name" value="Ribosomal_bL25_C"/>
</dbReference>
<dbReference type="InterPro" id="IPR001021">
    <property type="entry name" value="Ribosomal_bL25_long"/>
</dbReference>
<dbReference type="InterPro" id="IPR020055">
    <property type="entry name" value="Ribosomal_bL25_short"/>
</dbReference>
<dbReference type="InterPro" id="IPR029751">
    <property type="entry name" value="Ribosomal_L25_dom"/>
</dbReference>
<dbReference type="InterPro" id="IPR020930">
    <property type="entry name" value="Ribosomal_uL5_bac-type"/>
</dbReference>
<dbReference type="NCBIfam" id="TIGR00731">
    <property type="entry name" value="bL25_bact_ctc"/>
    <property type="match status" value="1"/>
</dbReference>
<dbReference type="NCBIfam" id="NF004130">
    <property type="entry name" value="PRK05618.1-5"/>
    <property type="match status" value="1"/>
</dbReference>
<dbReference type="NCBIfam" id="NF004612">
    <property type="entry name" value="PRK05943.1"/>
    <property type="match status" value="1"/>
</dbReference>
<dbReference type="PANTHER" id="PTHR33284">
    <property type="entry name" value="RIBOSOMAL PROTEIN L25/GLN-TRNA SYNTHETASE, ANTI-CODON-BINDING DOMAIN-CONTAINING PROTEIN"/>
    <property type="match status" value="1"/>
</dbReference>
<dbReference type="PANTHER" id="PTHR33284:SF1">
    <property type="entry name" value="RIBOSOMAL PROTEIN L25_GLN-TRNA SYNTHETASE, ANTI-CODON-BINDING DOMAIN-CONTAINING PROTEIN"/>
    <property type="match status" value="1"/>
</dbReference>
<dbReference type="Pfam" id="PF01386">
    <property type="entry name" value="Ribosomal_L25p"/>
    <property type="match status" value="1"/>
</dbReference>
<dbReference type="Pfam" id="PF14693">
    <property type="entry name" value="Ribosomal_TL5_C"/>
    <property type="match status" value="1"/>
</dbReference>
<dbReference type="SUPFAM" id="SSF50715">
    <property type="entry name" value="Ribosomal protein L25-like"/>
    <property type="match status" value="1"/>
</dbReference>
<comment type="function">
    <text evidence="1">This is one of the proteins that binds to the 5S RNA in the ribosome where it forms part of the central protuberance.</text>
</comment>
<comment type="subunit">
    <text evidence="1">Part of the 50S ribosomal subunit; part of the 5S rRNA/L5/L18/L25 subcomplex. Contacts the 5S rRNA. Binds to the 5S rRNA independently of L5 and L18.</text>
</comment>
<comment type="similarity">
    <text evidence="1">Belongs to the bacterial ribosomal protein bL25 family. CTC subfamily.</text>
</comment>
<sequence>MEFSMKFNATARSVQGSSASRRLRRAGRVPAIVYGGTAAPLNIELDHNEIYHALRKEEFHALILNMVIEGGKTEEVLLRSVQWHAYKPQVMHVDFQRVEANQALHTKVPLHFINAEVSPAVKLSGAIISHVLTELDITCLPALLPQFIEVNLGDLLGGGSIHLADIKLPKGVTFNAHGGDTNPLIAAAVVKGGGAADEGDAAAEQPAA</sequence>
<proteinExistence type="inferred from homology"/>
<evidence type="ECO:0000255" key="1">
    <source>
        <dbReference type="HAMAP-Rule" id="MF_01334"/>
    </source>
</evidence>
<evidence type="ECO:0000305" key="2"/>
<feature type="chain" id="PRO_0000181522" description="Large ribosomal subunit protein bL25">
    <location>
        <begin position="1"/>
        <end position="208"/>
    </location>
</feature>
<accession>Q7VUH2</accession>
<name>RL25_BORPE</name>
<gene>
    <name evidence="1" type="primary">rplY</name>
    <name evidence="1" type="synonym">ctc</name>
    <name type="ordered locus">BP3124</name>
</gene>
<protein>
    <recommendedName>
        <fullName evidence="1">Large ribosomal subunit protein bL25</fullName>
    </recommendedName>
    <alternativeName>
        <fullName evidence="2">50S ribosomal protein L25</fullName>
    </alternativeName>
    <alternativeName>
        <fullName evidence="1">General stress protein CTC</fullName>
    </alternativeName>
</protein>